<comment type="function">
    <text evidence="1">This is one of the proteins that bind and probably mediate the attachment of the 5S RNA into the large ribosomal subunit, where it forms part of the central protuberance. In the 70S ribosome it contacts protein S13 of the 30S subunit (bridge B1b), connecting the 2 subunits; this bridge is implicated in subunit movement. Contacts the P site tRNA; the 5S rRNA and some of its associated proteins might help stabilize positioning of ribosome-bound tRNAs.</text>
</comment>
<comment type="subunit">
    <text evidence="1">Part of the 50S ribosomal subunit; part of the 5S rRNA/L5/L18/L25 subcomplex. Contacts the 5S rRNA and the P site tRNA. Forms a bridge to the 30S subunit in the 70S ribosome.</text>
</comment>
<comment type="similarity">
    <text evidence="1">Belongs to the universal ribosomal protein uL5 family.</text>
</comment>
<reference key="1">
    <citation type="journal article" date="2008" name="J. Bacteriol.">
        <title>Complete genome sequence of Leuconostoc citreum KM20.</title>
        <authorList>
            <person name="Kim J.F."/>
            <person name="Jeong H."/>
            <person name="Lee J.-S."/>
            <person name="Choi S.-H."/>
            <person name="Ha M."/>
            <person name="Hur C.-G."/>
            <person name="Kim J.-S."/>
            <person name="Lee S."/>
            <person name="Park H.-S."/>
            <person name="Park Y.-H."/>
            <person name="Oh T.K."/>
        </authorList>
    </citation>
    <scope>NUCLEOTIDE SEQUENCE [LARGE SCALE GENOMIC DNA]</scope>
    <source>
        <strain>KM20</strain>
    </source>
</reference>
<dbReference type="EMBL" id="DQ489736">
    <property type="protein sequence ID" value="ACA83406.1"/>
    <property type="molecule type" value="Genomic_DNA"/>
</dbReference>
<dbReference type="RefSeq" id="WP_004899445.1">
    <property type="nucleotide sequence ID" value="NC_010471.1"/>
</dbReference>
<dbReference type="SMR" id="B1MW02"/>
<dbReference type="STRING" id="349519.LCK_01583"/>
<dbReference type="GeneID" id="61103253"/>
<dbReference type="KEGG" id="lci:LCK_01583"/>
<dbReference type="eggNOG" id="COG0094">
    <property type="taxonomic scope" value="Bacteria"/>
</dbReference>
<dbReference type="HOGENOM" id="CLU_061015_2_1_9"/>
<dbReference type="OrthoDB" id="9806626at2"/>
<dbReference type="Proteomes" id="UP000002166">
    <property type="component" value="Chromosome"/>
</dbReference>
<dbReference type="GO" id="GO:1990904">
    <property type="term" value="C:ribonucleoprotein complex"/>
    <property type="evidence" value="ECO:0007669"/>
    <property type="project" value="UniProtKB-KW"/>
</dbReference>
<dbReference type="GO" id="GO:0005840">
    <property type="term" value="C:ribosome"/>
    <property type="evidence" value="ECO:0007669"/>
    <property type="project" value="UniProtKB-KW"/>
</dbReference>
<dbReference type="GO" id="GO:0019843">
    <property type="term" value="F:rRNA binding"/>
    <property type="evidence" value="ECO:0007669"/>
    <property type="project" value="UniProtKB-UniRule"/>
</dbReference>
<dbReference type="GO" id="GO:0003735">
    <property type="term" value="F:structural constituent of ribosome"/>
    <property type="evidence" value="ECO:0007669"/>
    <property type="project" value="InterPro"/>
</dbReference>
<dbReference type="GO" id="GO:0000049">
    <property type="term" value="F:tRNA binding"/>
    <property type="evidence" value="ECO:0007669"/>
    <property type="project" value="UniProtKB-UniRule"/>
</dbReference>
<dbReference type="GO" id="GO:0006412">
    <property type="term" value="P:translation"/>
    <property type="evidence" value="ECO:0007669"/>
    <property type="project" value="UniProtKB-UniRule"/>
</dbReference>
<dbReference type="FunFam" id="3.30.1440.10:FF:000001">
    <property type="entry name" value="50S ribosomal protein L5"/>
    <property type="match status" value="1"/>
</dbReference>
<dbReference type="Gene3D" id="3.30.1440.10">
    <property type="match status" value="1"/>
</dbReference>
<dbReference type="HAMAP" id="MF_01333_B">
    <property type="entry name" value="Ribosomal_uL5_B"/>
    <property type="match status" value="1"/>
</dbReference>
<dbReference type="InterPro" id="IPR002132">
    <property type="entry name" value="Ribosomal_uL5"/>
</dbReference>
<dbReference type="InterPro" id="IPR020930">
    <property type="entry name" value="Ribosomal_uL5_bac-type"/>
</dbReference>
<dbReference type="InterPro" id="IPR031309">
    <property type="entry name" value="Ribosomal_uL5_C"/>
</dbReference>
<dbReference type="InterPro" id="IPR020929">
    <property type="entry name" value="Ribosomal_uL5_CS"/>
</dbReference>
<dbReference type="InterPro" id="IPR022803">
    <property type="entry name" value="Ribosomal_uL5_dom_sf"/>
</dbReference>
<dbReference type="InterPro" id="IPR031310">
    <property type="entry name" value="Ribosomal_uL5_N"/>
</dbReference>
<dbReference type="NCBIfam" id="NF000585">
    <property type="entry name" value="PRK00010.1"/>
    <property type="match status" value="1"/>
</dbReference>
<dbReference type="PANTHER" id="PTHR11994">
    <property type="entry name" value="60S RIBOSOMAL PROTEIN L11-RELATED"/>
    <property type="match status" value="1"/>
</dbReference>
<dbReference type="Pfam" id="PF00281">
    <property type="entry name" value="Ribosomal_L5"/>
    <property type="match status" value="1"/>
</dbReference>
<dbReference type="Pfam" id="PF00673">
    <property type="entry name" value="Ribosomal_L5_C"/>
    <property type="match status" value="1"/>
</dbReference>
<dbReference type="PIRSF" id="PIRSF002161">
    <property type="entry name" value="Ribosomal_L5"/>
    <property type="match status" value="1"/>
</dbReference>
<dbReference type="SUPFAM" id="SSF55282">
    <property type="entry name" value="RL5-like"/>
    <property type="match status" value="1"/>
</dbReference>
<dbReference type="PROSITE" id="PS00358">
    <property type="entry name" value="RIBOSOMAL_L5"/>
    <property type="match status" value="1"/>
</dbReference>
<keyword id="KW-1185">Reference proteome</keyword>
<keyword id="KW-0687">Ribonucleoprotein</keyword>
<keyword id="KW-0689">Ribosomal protein</keyword>
<keyword id="KW-0694">RNA-binding</keyword>
<keyword id="KW-0699">rRNA-binding</keyword>
<keyword id="KW-0820">tRNA-binding</keyword>
<accession>B1MW02</accession>
<sequence>MANALKEKYVNEVQPALIEKFNFTSPMQAPKIDKIVLNMGVGDAVSNSKNLDEAVEELKLIAGQQPVITKAKKSIAGFRLREGMSIGTKVTLRGARMYEFLDKLINISLPRVRDFRGVSSKAFDGRGNYTLGIREQLIFPEIDFDQVNRVRGLDIVVVTTAQNDEEGRELLTLLGMPFAK</sequence>
<feature type="chain" id="PRO_1000142420" description="Large ribosomal subunit protein uL5">
    <location>
        <begin position="1"/>
        <end position="180"/>
    </location>
</feature>
<evidence type="ECO:0000255" key="1">
    <source>
        <dbReference type="HAMAP-Rule" id="MF_01333"/>
    </source>
</evidence>
<evidence type="ECO:0000305" key="2"/>
<gene>
    <name evidence="1" type="primary">rplE</name>
    <name type="ordered locus">LCK_01583</name>
</gene>
<organism>
    <name type="scientific">Leuconostoc citreum (strain KM20)</name>
    <dbReference type="NCBI Taxonomy" id="349519"/>
    <lineage>
        <taxon>Bacteria</taxon>
        <taxon>Bacillati</taxon>
        <taxon>Bacillota</taxon>
        <taxon>Bacilli</taxon>
        <taxon>Lactobacillales</taxon>
        <taxon>Lactobacillaceae</taxon>
        <taxon>Leuconostoc</taxon>
    </lineage>
</organism>
<proteinExistence type="inferred from homology"/>
<protein>
    <recommendedName>
        <fullName evidence="1">Large ribosomal subunit protein uL5</fullName>
    </recommendedName>
    <alternativeName>
        <fullName evidence="2">50S ribosomal protein L5</fullName>
    </alternativeName>
</protein>
<name>RL5_LEUCK</name>